<dbReference type="EMBL" id="AB013396">
    <property type="status" value="NOT_ANNOTATED_CDS"/>
    <property type="molecule type" value="Genomic_DNA"/>
</dbReference>
<dbReference type="EMBL" id="CP002688">
    <property type="protein sequence ID" value="AED96955.1"/>
    <property type="molecule type" value="Genomic_DNA"/>
</dbReference>
<dbReference type="EMBL" id="AF412096">
    <property type="protein sequence ID" value="AAL06549.1"/>
    <property type="molecule type" value="mRNA"/>
</dbReference>
<dbReference type="EMBL" id="AY113061">
    <property type="protein sequence ID" value="AAM47369.1"/>
    <property type="molecule type" value="mRNA"/>
</dbReference>
<dbReference type="EMBL" id="AK117656">
    <property type="protein sequence ID" value="BAC42309.1"/>
    <property type="molecule type" value="mRNA"/>
</dbReference>
<dbReference type="EMBL" id="AK228364">
    <property type="protein sequence ID" value="BAF00303.1"/>
    <property type="molecule type" value="mRNA"/>
</dbReference>
<dbReference type="EMBL" id="AY086201">
    <property type="protein sequence ID" value="AAM64280.1"/>
    <property type="molecule type" value="mRNA"/>
</dbReference>
<dbReference type="RefSeq" id="NP_568867.1">
    <property type="nucleotide sequence ID" value="NM_125166.5"/>
</dbReference>
<dbReference type="SMR" id="Q945L0"/>
<dbReference type="FunCoup" id="Q945L0">
    <property type="interactions" value="2697"/>
</dbReference>
<dbReference type="STRING" id="3702.Q945L0"/>
<dbReference type="PaxDb" id="3702-AT5G57815.1"/>
<dbReference type="ProteomicsDB" id="220325"/>
<dbReference type="EnsemblPlants" id="AT5G57815.1">
    <property type="protein sequence ID" value="AT5G57815.1"/>
    <property type="gene ID" value="AT5G57815"/>
</dbReference>
<dbReference type="GeneID" id="835891"/>
<dbReference type="Gramene" id="AT5G57815.1">
    <property type="protein sequence ID" value="AT5G57815.1"/>
    <property type="gene ID" value="AT5G57815"/>
</dbReference>
<dbReference type="KEGG" id="ath:AT5G57815"/>
<dbReference type="Araport" id="AT5G57815"/>
<dbReference type="TAIR" id="AT5G57815"/>
<dbReference type="eggNOG" id="KOG3057">
    <property type="taxonomic scope" value="Eukaryota"/>
</dbReference>
<dbReference type="HOGENOM" id="CLU_133964_2_0_1"/>
<dbReference type="InParanoid" id="Q945L0"/>
<dbReference type="OMA" id="VQRWNQQ"/>
<dbReference type="OrthoDB" id="1020633at2759"/>
<dbReference type="PhylomeDB" id="Q945L0"/>
<dbReference type="PRO" id="PR:Q945L0"/>
<dbReference type="Proteomes" id="UP000006548">
    <property type="component" value="Chromosome 5"/>
</dbReference>
<dbReference type="ExpressionAtlas" id="Q945L0">
    <property type="expression patterns" value="baseline and differential"/>
</dbReference>
<dbReference type="GO" id="GO:0005739">
    <property type="term" value="C:mitochondrion"/>
    <property type="evidence" value="ECO:0007669"/>
    <property type="project" value="UniProtKB-SubCell"/>
</dbReference>
<dbReference type="GO" id="GO:0009536">
    <property type="term" value="C:plastid"/>
    <property type="evidence" value="ECO:0007005"/>
    <property type="project" value="TAIR"/>
</dbReference>
<dbReference type="GO" id="GO:0045277">
    <property type="term" value="C:respiratory chain complex IV"/>
    <property type="evidence" value="ECO:0007669"/>
    <property type="project" value="InterPro"/>
</dbReference>
<dbReference type="CDD" id="cd00926">
    <property type="entry name" value="Cyt_c_Oxidase_VIb"/>
    <property type="match status" value="1"/>
</dbReference>
<dbReference type="FunFam" id="1.10.10.140:FF:000004">
    <property type="entry name" value="Cytochrome c oxidase subunit"/>
    <property type="match status" value="1"/>
</dbReference>
<dbReference type="Gene3D" id="1.10.10.140">
    <property type="entry name" value="Cytochrome c oxidase, subunit VIb"/>
    <property type="match status" value="1"/>
</dbReference>
<dbReference type="InterPro" id="IPR048280">
    <property type="entry name" value="COX6B-like"/>
</dbReference>
<dbReference type="InterPro" id="IPR036549">
    <property type="entry name" value="CX6/COA6-like_sf"/>
</dbReference>
<dbReference type="InterPro" id="IPR003213">
    <property type="entry name" value="Cyt_c_oxidase_su6B"/>
</dbReference>
<dbReference type="PANTHER" id="PTHR46281:SF8">
    <property type="entry name" value="CYTOCHROME C OXIDASE SUBUNIT 12, MITOCHONDRIAL"/>
    <property type="match status" value="1"/>
</dbReference>
<dbReference type="PANTHER" id="PTHR46281">
    <property type="entry name" value="CYTOCHROME C OXIDASE SUBUNIT 6B"/>
    <property type="match status" value="1"/>
</dbReference>
<dbReference type="Pfam" id="PF02297">
    <property type="entry name" value="COX6B"/>
    <property type="match status" value="1"/>
</dbReference>
<dbReference type="PIRSF" id="PIRSF000278">
    <property type="entry name" value="Cyt_c_oxidase_6B"/>
    <property type="match status" value="1"/>
</dbReference>
<dbReference type="SUPFAM" id="SSF47694">
    <property type="entry name" value="Cytochrome c oxidase subunit h"/>
    <property type="match status" value="1"/>
</dbReference>
<dbReference type="PROSITE" id="PS51808">
    <property type="entry name" value="CHCH"/>
    <property type="match status" value="1"/>
</dbReference>
<name>CX6B2_ARATH</name>
<comment type="function">
    <text>This protein is one of the nuclear-coded polypeptide chains of cytochrome c oxidase, the terminal oxidase in mitochondrial electron transport. This protein may be one of the heme-binding subunits of the oxidase.</text>
</comment>
<comment type="subcellular location">
    <subcellularLocation>
        <location evidence="1">Mitochondrion</location>
    </subcellularLocation>
</comment>
<comment type="tissue specificity">
    <text evidence="3">Specifically expressed in roots.</text>
</comment>
<comment type="similarity">
    <text evidence="4">Belongs to the cytochrome c oxidase subunit 6B (TC 3.D.4.8) family.</text>
</comment>
<gene>
    <name type="primary">COX6B-2</name>
    <name type="ordered locus">At5g57815</name>
    <name type="ORF">MTI20.5</name>
</gene>
<evidence type="ECO:0000250" key="1"/>
<evidence type="ECO:0000255" key="2">
    <source>
        <dbReference type="PROSITE-ProRule" id="PRU01150"/>
    </source>
</evidence>
<evidence type="ECO:0000269" key="3">
    <source>
    </source>
</evidence>
<evidence type="ECO:0000305" key="4"/>
<protein>
    <recommendedName>
        <fullName>Cytochrome c oxidase subunit 6b-2</fullName>
        <shortName>AtCOX6b-2</shortName>
    </recommendedName>
</protein>
<sequence>MEDEIELKTAPADFRFPTTNQTRHCFTRYIEFHRCTTAKGEESNDCERFAKYYRALCPGEWVDKWNEQRESGTFPGPL</sequence>
<accession>Q945L0</accession>
<accession>Q8LD51</accession>
<proteinExistence type="evidence at transcript level"/>
<reference key="1">
    <citation type="journal article" date="1998" name="DNA Res.">
        <title>Structural analysis of Arabidopsis thaliana chromosome 5. VI. Sequence features of the regions of 1,367,185 bp covered by 19 physically assigned P1 and TAC clones.</title>
        <authorList>
            <person name="Kotani H."/>
            <person name="Nakamura Y."/>
            <person name="Sato S."/>
            <person name="Asamizu E."/>
            <person name="Kaneko T."/>
            <person name="Miyajima N."/>
            <person name="Tabata S."/>
        </authorList>
    </citation>
    <scope>NUCLEOTIDE SEQUENCE [LARGE SCALE GENOMIC DNA]</scope>
    <source>
        <strain>cv. Columbia</strain>
    </source>
</reference>
<reference key="2">
    <citation type="journal article" date="2017" name="Plant J.">
        <title>Araport11: a complete reannotation of the Arabidopsis thaliana reference genome.</title>
        <authorList>
            <person name="Cheng C.Y."/>
            <person name="Krishnakumar V."/>
            <person name="Chan A.P."/>
            <person name="Thibaud-Nissen F."/>
            <person name="Schobel S."/>
            <person name="Town C.D."/>
        </authorList>
    </citation>
    <scope>GENOME REANNOTATION</scope>
    <source>
        <strain>cv. Columbia</strain>
    </source>
</reference>
<reference key="3">
    <citation type="journal article" date="2002" name="Science">
        <title>Functional annotation of a full-length Arabidopsis cDNA collection.</title>
        <authorList>
            <person name="Seki M."/>
            <person name="Narusaka M."/>
            <person name="Kamiya A."/>
            <person name="Ishida J."/>
            <person name="Satou M."/>
            <person name="Sakurai T."/>
            <person name="Nakajima M."/>
            <person name="Enju A."/>
            <person name="Akiyama K."/>
            <person name="Oono Y."/>
            <person name="Muramatsu M."/>
            <person name="Hayashizaki Y."/>
            <person name="Kawai J."/>
            <person name="Carninci P."/>
            <person name="Itoh M."/>
            <person name="Ishii Y."/>
            <person name="Arakawa T."/>
            <person name="Shibata K."/>
            <person name="Shinagawa A."/>
            <person name="Shinozaki K."/>
        </authorList>
    </citation>
    <scope>NUCLEOTIDE SEQUENCE [LARGE SCALE MRNA]</scope>
    <source>
        <strain>cv. Columbia</strain>
    </source>
</reference>
<reference key="4">
    <citation type="journal article" date="2003" name="Science">
        <title>Empirical analysis of transcriptional activity in the Arabidopsis genome.</title>
        <authorList>
            <person name="Yamada K."/>
            <person name="Lim J."/>
            <person name="Dale J.M."/>
            <person name="Chen H."/>
            <person name="Shinn P."/>
            <person name="Palm C.J."/>
            <person name="Southwick A.M."/>
            <person name="Wu H.C."/>
            <person name="Kim C.J."/>
            <person name="Nguyen M."/>
            <person name="Pham P.K."/>
            <person name="Cheuk R.F."/>
            <person name="Karlin-Newmann G."/>
            <person name="Liu S.X."/>
            <person name="Lam B."/>
            <person name="Sakano H."/>
            <person name="Wu T."/>
            <person name="Yu G."/>
            <person name="Miranda M."/>
            <person name="Quach H.L."/>
            <person name="Tripp M."/>
            <person name="Chang C.H."/>
            <person name="Lee J.M."/>
            <person name="Toriumi M.J."/>
            <person name="Chan M.M."/>
            <person name="Tang C.C."/>
            <person name="Onodera C.S."/>
            <person name="Deng J.M."/>
            <person name="Akiyama K."/>
            <person name="Ansari Y."/>
            <person name="Arakawa T."/>
            <person name="Banh J."/>
            <person name="Banno F."/>
            <person name="Bowser L."/>
            <person name="Brooks S.Y."/>
            <person name="Carninci P."/>
            <person name="Chao Q."/>
            <person name="Choy N."/>
            <person name="Enju A."/>
            <person name="Goldsmith A.D."/>
            <person name="Gurjal M."/>
            <person name="Hansen N.F."/>
            <person name="Hayashizaki Y."/>
            <person name="Johnson-Hopson C."/>
            <person name="Hsuan V.W."/>
            <person name="Iida K."/>
            <person name="Karnes M."/>
            <person name="Khan S."/>
            <person name="Koesema E."/>
            <person name="Ishida J."/>
            <person name="Jiang P.X."/>
            <person name="Jones T."/>
            <person name="Kawai J."/>
            <person name="Kamiya A."/>
            <person name="Meyers C."/>
            <person name="Nakajima M."/>
            <person name="Narusaka M."/>
            <person name="Seki M."/>
            <person name="Sakurai T."/>
            <person name="Satou M."/>
            <person name="Tamse R."/>
            <person name="Vaysberg M."/>
            <person name="Wallender E.K."/>
            <person name="Wong C."/>
            <person name="Yamamura Y."/>
            <person name="Yuan S."/>
            <person name="Shinozaki K."/>
            <person name="Davis R.W."/>
            <person name="Theologis A."/>
            <person name="Ecker J.R."/>
        </authorList>
    </citation>
    <scope>NUCLEOTIDE SEQUENCE [LARGE SCALE MRNA]</scope>
    <source>
        <strain>cv. Columbia</strain>
    </source>
</reference>
<reference key="5">
    <citation type="submission" date="2006-07" db="EMBL/GenBank/DDBJ databases">
        <title>Large-scale analysis of RIKEN Arabidopsis full-length (RAFL) cDNAs.</title>
        <authorList>
            <person name="Totoki Y."/>
            <person name="Seki M."/>
            <person name="Ishida J."/>
            <person name="Nakajima M."/>
            <person name="Enju A."/>
            <person name="Kamiya A."/>
            <person name="Narusaka M."/>
            <person name="Shin-i T."/>
            <person name="Nakagawa M."/>
            <person name="Sakamoto N."/>
            <person name="Oishi K."/>
            <person name="Kohara Y."/>
            <person name="Kobayashi M."/>
            <person name="Toyoda A."/>
            <person name="Sakaki Y."/>
            <person name="Sakurai T."/>
            <person name="Iida K."/>
            <person name="Akiyama K."/>
            <person name="Satou M."/>
            <person name="Toyoda T."/>
            <person name="Konagaya A."/>
            <person name="Carninci P."/>
            <person name="Kawai J."/>
            <person name="Hayashizaki Y."/>
            <person name="Shinozaki K."/>
        </authorList>
    </citation>
    <scope>NUCLEOTIDE SEQUENCE [LARGE SCALE MRNA]</scope>
    <source>
        <strain>cv. Columbia</strain>
    </source>
</reference>
<reference key="6">
    <citation type="submission" date="2002-03" db="EMBL/GenBank/DDBJ databases">
        <title>Full-length cDNA from Arabidopsis thaliana.</title>
        <authorList>
            <person name="Brover V.V."/>
            <person name="Troukhan M.E."/>
            <person name="Alexandrov N.A."/>
            <person name="Lu Y.-P."/>
            <person name="Flavell R.B."/>
            <person name="Feldmann K.A."/>
        </authorList>
    </citation>
    <scope>NUCLEOTIDE SEQUENCE [LARGE SCALE MRNA]</scope>
</reference>
<reference key="7">
    <citation type="journal article" date="2001" name="Gene">
        <title>Characterization and expression of the genes for cytochrome c oxidase subunit VIb (COX6b) from rice and Arabidopsis thaliana.</title>
        <authorList>
            <person name="Ohtsu K."/>
            <person name="Nakazono M."/>
            <person name="Tsutsumi N."/>
            <person name="Hirai A."/>
        </authorList>
    </citation>
    <scope>GENE FAMILY</scope>
    <scope>NOMENCLATURE</scope>
    <scope>TISSUE SPECIFICITY</scope>
</reference>
<keyword id="KW-1015">Disulfide bond</keyword>
<keyword id="KW-0496">Mitochondrion</keyword>
<keyword id="KW-1185">Reference proteome</keyword>
<feature type="chain" id="PRO_0000412234" description="Cytochrome c oxidase subunit 6b-2">
    <location>
        <begin position="1"/>
        <end position="78"/>
    </location>
</feature>
<feature type="domain" description="CHCH" evidence="2">
    <location>
        <begin position="22"/>
        <end position="65"/>
    </location>
</feature>
<feature type="short sequence motif" description="Cx9C motif" evidence="2">
    <location>
        <begin position="25"/>
        <end position="35"/>
    </location>
</feature>
<feature type="short sequence motif" description="Cx10C motif" evidence="2">
    <location>
        <begin position="46"/>
        <end position="57"/>
    </location>
</feature>
<feature type="disulfide bond" evidence="2">
    <location>
        <begin position="25"/>
        <end position="57"/>
    </location>
</feature>
<feature type="disulfide bond" evidence="2">
    <location>
        <begin position="35"/>
        <end position="46"/>
    </location>
</feature>
<feature type="sequence conflict" description="In Ref. 6; AAM64280." evidence="4" ref="6">
    <original>E</original>
    <variation>K</variation>
    <location>
        <position position="31"/>
    </location>
</feature>
<organism>
    <name type="scientific">Arabidopsis thaliana</name>
    <name type="common">Mouse-ear cress</name>
    <dbReference type="NCBI Taxonomy" id="3702"/>
    <lineage>
        <taxon>Eukaryota</taxon>
        <taxon>Viridiplantae</taxon>
        <taxon>Streptophyta</taxon>
        <taxon>Embryophyta</taxon>
        <taxon>Tracheophyta</taxon>
        <taxon>Spermatophyta</taxon>
        <taxon>Magnoliopsida</taxon>
        <taxon>eudicotyledons</taxon>
        <taxon>Gunneridae</taxon>
        <taxon>Pentapetalae</taxon>
        <taxon>rosids</taxon>
        <taxon>malvids</taxon>
        <taxon>Brassicales</taxon>
        <taxon>Brassicaceae</taxon>
        <taxon>Camelineae</taxon>
        <taxon>Arabidopsis</taxon>
    </lineage>
</organism>